<gene>
    <name evidence="1" type="primary">eno</name>
    <name type="ordered locus">M6_Spy0577</name>
</gene>
<name>ENO_STRP6</name>
<reference key="1">
    <citation type="journal article" date="2004" name="J. Infect. Dis.">
        <title>Progress toward characterization of the group A Streptococcus metagenome: complete genome sequence of a macrolide-resistant serotype M6 strain.</title>
        <authorList>
            <person name="Banks D.J."/>
            <person name="Porcella S.F."/>
            <person name="Barbian K.D."/>
            <person name="Beres S.B."/>
            <person name="Philips L.E."/>
            <person name="Voyich J.M."/>
            <person name="DeLeo F.R."/>
            <person name="Martin J.M."/>
            <person name="Somerville G.A."/>
            <person name="Musser J.M."/>
        </authorList>
    </citation>
    <scope>NUCLEOTIDE SEQUENCE [LARGE SCALE GENOMIC DNA]</scope>
    <source>
        <strain>ATCC BAA-946 / MGAS10394</strain>
    </source>
</reference>
<reference key="2">
    <citation type="submission" date="2000-05" db="UniProtKB">
        <title>Two-dimensional gel electrophoresis map of Streptococcus pyogenes proteins.</title>
        <authorList>
            <person name="Hogan D.A."/>
            <person name="Du P."/>
            <person name="Stevenson T.I."/>
            <person name="Whitton M."/>
            <person name="Kilby G.W."/>
            <person name="Rogers J."/>
            <person name="VanBogelen R.A."/>
        </authorList>
    </citation>
    <scope>PROTEIN SEQUENCE OF 2-10; 17-34; 106-140; 181-191; 197-224; 256-270; 313-331; 345-395 AND 408-413</scope>
    <scope>IDENTIFICATION BY MASS SPECTROMETRY</scope>
    <source>
        <strain>JRS4 / Serotype M6</strain>
    </source>
</reference>
<reference key="3">
    <citation type="journal article" date="1998" name="J. Biol. Chem.">
        <title>Alpha-enolase, a novel strong plasmin(ogen) binding protein on the surface of pathogenic streptococci.</title>
        <authorList>
            <person name="Pancholi V."/>
            <person name="Fischetti V.A."/>
        </authorList>
    </citation>
    <scope>PROTEIN SEQUENCE OF 2-51; 195-209 AND 367-372</scope>
    <scope>FUNCTION</scope>
    <scope>CATALYTIC ACTIVITY</scope>
    <scope>BIOPHYSICOCHEMICAL PROPERTIES</scope>
    <scope>SUBCELLULAR LOCATION</scope>
    <scope>PLASMINOGEN-BINDING</scope>
    <source>
        <strain>D471 / Serotype M6</strain>
    </source>
</reference>
<reference key="4">
    <citation type="journal article" date="2004" name="Infect. Immun.">
        <title>Role of the C-terminal lysine residues of streptococcal surface enolase in Glu- and Lys-plasminogen-binding activities of group A streptococci.</title>
        <authorList>
            <person name="Derbise A."/>
            <person name="Song Y.P."/>
            <person name="Parikh S."/>
            <person name="Fischetti V.A."/>
            <person name="Pancholi V."/>
        </authorList>
    </citation>
    <scope>FUNCTION</scope>
    <scope>CATALYTIC ACTIVITY</scope>
    <scope>PLASMINOGEN-BINDING</scope>
    <scope>MUTAGENESIS OF LYS-428; LYS-434 AND LYS-435</scope>
    <source>
        <strain>D471 / Serotype M6</strain>
    </source>
</reference>
<reference evidence="9 10 11" key="5">
    <citation type="journal article" date="2015" name="PLoS ONE">
        <title>Stability of the octameric structure affects plasminogen-binding capacity of streptococcal enolase.</title>
        <authorList>
            <person name="Cork A.J."/>
            <person name="Ericsson D.J."/>
            <person name="Law R.H."/>
            <person name="Casey L.W."/>
            <person name="Valkov E."/>
            <person name="Bertozzi C."/>
            <person name="Stamp A."/>
            <person name="Jovcevski B."/>
            <person name="Aquilina J.A."/>
            <person name="Whisstock J.C."/>
            <person name="Walker M.J."/>
            <person name="Kobe B."/>
        </authorList>
    </citation>
    <scope>X-RAY CRYSTALLOGRAPHY (2.10 ANGSTROMS)</scope>
    <scope>PLASMINOGEN-BINDING</scope>
    <scope>SUBUNIT</scope>
    <scope>MUTAGENESIS OF LYS-312 AND LYS-362</scope>
    <source>
        <strain>ATCC BAA-946 / MGAS10394</strain>
    </source>
</reference>
<dbReference type="EC" id="4.2.1.11" evidence="1 4"/>
<dbReference type="EMBL" id="CP000003">
    <property type="protein sequence ID" value="AAT86712.1"/>
    <property type="status" value="ALT_FRAME"/>
    <property type="molecule type" value="Genomic_DNA"/>
</dbReference>
<dbReference type="PDB" id="3ZLF">
    <property type="method" value="X-ray"/>
    <property type="resolution" value="2.15 A"/>
    <property type="chains" value="A/B/C/D=1-435"/>
</dbReference>
<dbReference type="PDB" id="3ZLG">
    <property type="method" value="X-ray"/>
    <property type="resolution" value="2.10 A"/>
    <property type="chains" value="A/B/C/D=1-435"/>
</dbReference>
<dbReference type="PDB" id="3ZLH">
    <property type="method" value="X-ray"/>
    <property type="resolution" value="2.90 A"/>
    <property type="chains" value="A/B/C/D=1-435"/>
</dbReference>
<dbReference type="PDBsum" id="3ZLF"/>
<dbReference type="PDBsum" id="3ZLG"/>
<dbReference type="PDBsum" id="3ZLH"/>
<dbReference type="SMR" id="Q5XD01"/>
<dbReference type="KEGG" id="spa:M6_Spy0577"/>
<dbReference type="HOGENOM" id="CLU_031223_0_1_9"/>
<dbReference type="SABIO-RK" id="Q5XD01"/>
<dbReference type="UniPathway" id="UPA00109">
    <property type="reaction ID" value="UER00187"/>
</dbReference>
<dbReference type="EvolutionaryTrace" id="Q5XD01"/>
<dbReference type="Proteomes" id="UP000001167">
    <property type="component" value="Chromosome"/>
</dbReference>
<dbReference type="GO" id="GO:0009986">
    <property type="term" value="C:cell surface"/>
    <property type="evidence" value="ECO:0007669"/>
    <property type="project" value="UniProtKB-SubCell"/>
</dbReference>
<dbReference type="GO" id="GO:0005576">
    <property type="term" value="C:extracellular region"/>
    <property type="evidence" value="ECO:0007669"/>
    <property type="project" value="UniProtKB-SubCell"/>
</dbReference>
<dbReference type="GO" id="GO:0009274">
    <property type="term" value="C:peptidoglycan-based cell wall"/>
    <property type="evidence" value="ECO:0000314"/>
    <property type="project" value="CAFA"/>
</dbReference>
<dbReference type="GO" id="GO:0000015">
    <property type="term" value="C:phosphopyruvate hydratase complex"/>
    <property type="evidence" value="ECO:0000314"/>
    <property type="project" value="CAFA"/>
</dbReference>
<dbReference type="GO" id="GO:0005886">
    <property type="term" value="C:plasma membrane"/>
    <property type="evidence" value="ECO:0000314"/>
    <property type="project" value="CAFA"/>
</dbReference>
<dbReference type="GO" id="GO:0000287">
    <property type="term" value="F:magnesium ion binding"/>
    <property type="evidence" value="ECO:0007669"/>
    <property type="project" value="UniProtKB-UniRule"/>
</dbReference>
<dbReference type="GO" id="GO:0004634">
    <property type="term" value="F:phosphopyruvate hydratase activity"/>
    <property type="evidence" value="ECO:0000314"/>
    <property type="project" value="CAFA"/>
</dbReference>
<dbReference type="GO" id="GO:0006096">
    <property type="term" value="P:glycolytic process"/>
    <property type="evidence" value="ECO:0007669"/>
    <property type="project" value="UniProtKB-UniRule"/>
</dbReference>
<dbReference type="CDD" id="cd03313">
    <property type="entry name" value="enolase"/>
    <property type="match status" value="1"/>
</dbReference>
<dbReference type="FunFam" id="3.20.20.120:FF:000001">
    <property type="entry name" value="Enolase"/>
    <property type="match status" value="1"/>
</dbReference>
<dbReference type="FunFam" id="3.30.390.10:FF:000001">
    <property type="entry name" value="Enolase"/>
    <property type="match status" value="1"/>
</dbReference>
<dbReference type="Gene3D" id="3.20.20.120">
    <property type="entry name" value="Enolase-like C-terminal domain"/>
    <property type="match status" value="1"/>
</dbReference>
<dbReference type="Gene3D" id="3.30.390.10">
    <property type="entry name" value="Enolase-like, N-terminal domain"/>
    <property type="match status" value="1"/>
</dbReference>
<dbReference type="HAMAP" id="MF_00318">
    <property type="entry name" value="Enolase"/>
    <property type="match status" value="1"/>
</dbReference>
<dbReference type="InterPro" id="IPR000941">
    <property type="entry name" value="Enolase"/>
</dbReference>
<dbReference type="InterPro" id="IPR036849">
    <property type="entry name" value="Enolase-like_C_sf"/>
</dbReference>
<dbReference type="InterPro" id="IPR029017">
    <property type="entry name" value="Enolase-like_N"/>
</dbReference>
<dbReference type="InterPro" id="IPR020810">
    <property type="entry name" value="Enolase_C"/>
</dbReference>
<dbReference type="InterPro" id="IPR020809">
    <property type="entry name" value="Enolase_CS"/>
</dbReference>
<dbReference type="InterPro" id="IPR020811">
    <property type="entry name" value="Enolase_N"/>
</dbReference>
<dbReference type="NCBIfam" id="TIGR01060">
    <property type="entry name" value="eno"/>
    <property type="match status" value="1"/>
</dbReference>
<dbReference type="PANTHER" id="PTHR11902">
    <property type="entry name" value="ENOLASE"/>
    <property type="match status" value="1"/>
</dbReference>
<dbReference type="PANTHER" id="PTHR11902:SF1">
    <property type="entry name" value="ENOLASE"/>
    <property type="match status" value="1"/>
</dbReference>
<dbReference type="Pfam" id="PF00113">
    <property type="entry name" value="Enolase_C"/>
    <property type="match status" value="1"/>
</dbReference>
<dbReference type="Pfam" id="PF03952">
    <property type="entry name" value="Enolase_N"/>
    <property type="match status" value="1"/>
</dbReference>
<dbReference type="PIRSF" id="PIRSF001400">
    <property type="entry name" value="Enolase"/>
    <property type="match status" value="1"/>
</dbReference>
<dbReference type="PRINTS" id="PR00148">
    <property type="entry name" value="ENOLASE"/>
</dbReference>
<dbReference type="SFLD" id="SFLDS00001">
    <property type="entry name" value="Enolase"/>
    <property type="match status" value="1"/>
</dbReference>
<dbReference type="SFLD" id="SFLDF00002">
    <property type="entry name" value="enolase"/>
    <property type="match status" value="1"/>
</dbReference>
<dbReference type="SMART" id="SM01192">
    <property type="entry name" value="Enolase_C"/>
    <property type="match status" value="1"/>
</dbReference>
<dbReference type="SMART" id="SM01193">
    <property type="entry name" value="Enolase_N"/>
    <property type="match status" value="1"/>
</dbReference>
<dbReference type="SUPFAM" id="SSF51604">
    <property type="entry name" value="Enolase C-terminal domain-like"/>
    <property type="match status" value="1"/>
</dbReference>
<dbReference type="SUPFAM" id="SSF54826">
    <property type="entry name" value="Enolase N-terminal domain-like"/>
    <property type="match status" value="1"/>
</dbReference>
<dbReference type="PROSITE" id="PS00164">
    <property type="entry name" value="ENOLASE"/>
    <property type="match status" value="1"/>
</dbReference>
<comment type="function">
    <text evidence="1 2 4">Catalyzes the reversible conversion of 2-phosphoglycerate (2-PG) into phosphoenolpyruvate (PEP) (PubMed:14688086, PubMed:9603964). It is essential for the degradation of carbohydrates via glycolysis.</text>
</comment>
<comment type="function">
    <text evidence="2 3 4 8">'Moonlights' as a plasminogen receptor. Binds plasminogen and more weakly plasmin when expressed on the bacterial cell surface; probably has more than one plasmin(ogen) binding site, may bind via Lys residues (PubMed:14688086, PubMed:25807546, PubMed:9603964). Plasminogen binding potentially allows the bacterium to acquire surface-associated proteolytic activity, which in turn contributes to tissue invasion and virulence (Probable).</text>
</comment>
<comment type="catalytic activity">
    <reaction evidence="1 2 4">
        <text>(2R)-2-phosphoglycerate = phosphoenolpyruvate + H2O</text>
        <dbReference type="Rhea" id="RHEA:10164"/>
        <dbReference type="ChEBI" id="CHEBI:15377"/>
        <dbReference type="ChEBI" id="CHEBI:58289"/>
        <dbReference type="ChEBI" id="CHEBI:58702"/>
        <dbReference type="EC" id="4.2.1.11"/>
    </reaction>
    <physiologicalReaction direction="left-to-right" evidence="2 4">
        <dbReference type="Rhea" id="RHEA:10165"/>
    </physiologicalReaction>
</comment>
<comment type="cofactor">
    <cofactor evidence="1">
        <name>Mg(2+)</name>
        <dbReference type="ChEBI" id="CHEBI:18420"/>
    </cofactor>
    <text evidence="1">Binds a second Mg(2+) ion via substrate during catalysis.</text>
</comment>
<comment type="biophysicochemical properties">
    <kinetics>
        <KM evidence="4">1.49 mM for 2-phospho-D-glycerate</KM>
        <Vmax evidence="4">31.25 mmol/min/mg enzyme</Vmax>
        <text>Catalytically active also when expressed on the bacterial cell surface.</text>
    </kinetics>
</comment>
<comment type="pathway">
    <text evidence="1">Carbohydrate degradation; glycolysis; pyruvate from D-glyceraldehyde 3-phosphate: step 4/5.</text>
</comment>
<comment type="subunit">
    <text evidence="3">Homooctamer, a tetramer of homodimers (PubMed:25807546).</text>
</comment>
<comment type="subcellular location">
    <subcellularLocation>
        <location evidence="1 4">Cytoplasm</location>
    </subcellularLocation>
    <subcellularLocation>
        <location evidence="1">Secreted</location>
    </subcellularLocation>
    <subcellularLocation>
        <location evidence="1 4">Cell surface</location>
    </subcellularLocation>
    <subcellularLocation>
        <location evidence="4">Secreted</location>
        <location evidence="4">Cell wall</location>
    </subcellularLocation>
    <text evidence="4">Fractions of enolase are present in both the cytoplasm and on the cell surface (PubMed:9603964). Once secreted, it remains attached to the cell surface (PubMed:9603964).</text>
</comment>
<comment type="similarity">
    <text evidence="1">Belongs to the enolase family.</text>
</comment>
<comment type="sequence caution" evidence="7">
    <conflict type="frameshift">
        <sequence resource="EMBL-CDS" id="AAT86712"/>
    </conflict>
</comment>
<protein>
    <recommendedName>
        <fullName evidence="1">Enolase</fullName>
        <ecNumber evidence="1 4">4.2.1.11</ecNumber>
    </recommendedName>
    <alternativeName>
        <fullName evidence="1">2-phospho-D-glycerate hydro-lyase</fullName>
    </alternativeName>
    <alternativeName>
        <fullName evidence="1">2-phosphoglycerate dehydratase</fullName>
    </alternativeName>
    <alternativeName>
        <fullName evidence="6">Streptococcal surface enolase</fullName>
        <shortName evidence="6">SEN</shortName>
    </alternativeName>
</protein>
<feature type="initiator methionine" description="Removed" evidence="4 5">
    <location>
        <position position="1"/>
    </location>
</feature>
<feature type="chain" id="PRO_0000133984" description="Enolase">
    <location>
        <begin position="2"/>
        <end position="435"/>
    </location>
</feature>
<feature type="active site" description="Proton donor" evidence="1">
    <location>
        <position position="205"/>
    </location>
</feature>
<feature type="active site" description="Proton acceptor" evidence="1">
    <location>
        <position position="344"/>
    </location>
</feature>
<feature type="binding site" evidence="1">
    <location>
        <position position="163"/>
    </location>
    <ligand>
        <name>(2R)-2-phosphoglycerate</name>
        <dbReference type="ChEBI" id="CHEBI:58289"/>
    </ligand>
</feature>
<feature type="binding site" evidence="1">
    <location>
        <position position="243"/>
    </location>
    <ligand>
        <name>Mg(2+)</name>
        <dbReference type="ChEBI" id="CHEBI:18420"/>
    </ligand>
</feature>
<feature type="binding site" evidence="1">
    <location>
        <position position="292"/>
    </location>
    <ligand>
        <name>Mg(2+)</name>
        <dbReference type="ChEBI" id="CHEBI:18420"/>
    </ligand>
</feature>
<feature type="binding site" evidence="1">
    <location>
        <position position="319"/>
    </location>
    <ligand>
        <name>Mg(2+)</name>
        <dbReference type="ChEBI" id="CHEBI:18420"/>
    </ligand>
</feature>
<feature type="binding site" evidence="1">
    <location>
        <position position="344"/>
    </location>
    <ligand>
        <name>(2R)-2-phosphoglycerate</name>
        <dbReference type="ChEBI" id="CHEBI:58289"/>
    </ligand>
</feature>
<feature type="binding site" evidence="1">
    <location>
        <position position="373"/>
    </location>
    <ligand>
        <name>(2R)-2-phosphoglycerate</name>
        <dbReference type="ChEBI" id="CHEBI:58289"/>
    </ligand>
</feature>
<feature type="binding site" evidence="1">
    <location>
        <position position="374"/>
    </location>
    <ligand>
        <name>(2R)-2-phosphoglycerate</name>
        <dbReference type="ChEBI" id="CHEBI:58289"/>
    </ligand>
</feature>
<feature type="binding site" evidence="1">
    <location>
        <position position="395"/>
    </location>
    <ligand>
        <name>(2R)-2-phosphoglycerate</name>
        <dbReference type="ChEBI" id="CHEBI:58289"/>
    </ligand>
</feature>
<feature type="site" description="Important for binding of plasminogen" evidence="2">
    <location>
        <position position="428"/>
    </location>
</feature>
<feature type="site" description="Important for binding of plasminogen" evidence="2">
    <location>
        <position position="434"/>
    </location>
</feature>
<feature type="site" description="Important for binding of plasminogen" evidence="2">
    <location>
        <position position="435"/>
    </location>
</feature>
<feature type="mutagenesis site" description="62% enzmye activity, about 200% increased plasminogen binding, about 1.75-fold better tPA-dependent plasminogen activation." evidence="3">
    <original>K</original>
    <variation>A</variation>
    <location>
        <position position="312"/>
    </location>
</feature>
<feature type="mutagenesis site" description="54% enzyme activity,octomeric structure is less stable, about 340% increased plasminogen binding, about 0.58-fold decreased tPA-dependent plasminogen activation." evidence="3">
    <original>K</original>
    <variation>A</variation>
    <location>
        <position position="362"/>
    </location>
</feature>
<feature type="mutagenesis site" description="No effect on catalytic activity; significant decrease in the ability to bind Glu- and Lys-plasminogen." evidence="2">
    <original>K</original>
    <variation>L</variation>
    <location>
        <position position="428"/>
    </location>
</feature>
<feature type="mutagenesis site" description="No effect on catalytic activity; significant decrease in the ability to bind Glu- and Lys-plasminogen." evidence="2">
    <original>K</original>
    <variation>L</variation>
    <location>
        <position position="434"/>
    </location>
</feature>
<feature type="mutagenesis site" description="No effect on catalytic activity; significant decrease in the ability to bind Glu- and Lys-plasminogen." evidence="2">
    <original>K</original>
    <variation>L</variation>
    <location>
        <position position="435"/>
    </location>
</feature>
<feature type="sequence conflict" description="In Ref. 3; AA sequence." evidence="7" ref="3">
    <original>S</original>
    <variation>G</variation>
    <location>
        <position position="42"/>
    </location>
</feature>
<feature type="sequence conflict" description="In Ref. 3; AA sequence." evidence="7" ref="3">
    <original>G</original>
    <variation>T</variation>
    <location>
        <position position="44"/>
    </location>
</feature>
<feature type="sequence conflict" description="In Ref. 3; AA sequence." evidence="7" ref="3">
    <original>T</original>
    <variation>S</variation>
    <location>
        <position position="367"/>
    </location>
</feature>
<feature type="strand" evidence="13">
    <location>
        <begin position="3"/>
        <end position="13"/>
    </location>
</feature>
<feature type="strand" evidence="13">
    <location>
        <begin position="19"/>
        <end position="27"/>
    </location>
</feature>
<feature type="strand" evidence="13">
    <location>
        <begin position="32"/>
        <end position="36"/>
    </location>
</feature>
<feature type="strand" evidence="13">
    <location>
        <begin position="44"/>
        <end position="47"/>
    </location>
</feature>
<feature type="helix" evidence="13">
    <location>
        <begin position="59"/>
        <end position="61"/>
    </location>
</feature>
<feature type="helix" evidence="13">
    <location>
        <begin position="65"/>
        <end position="73"/>
    </location>
</feature>
<feature type="helix" evidence="13">
    <location>
        <begin position="75"/>
        <end position="79"/>
    </location>
</feature>
<feature type="helix" evidence="13">
    <location>
        <begin position="87"/>
        <end position="98"/>
    </location>
</feature>
<feature type="turn" evidence="13">
    <location>
        <begin position="104"/>
        <end position="106"/>
    </location>
</feature>
<feature type="helix" evidence="13">
    <location>
        <begin position="108"/>
        <end position="126"/>
    </location>
</feature>
<feature type="helix" evidence="13">
    <location>
        <begin position="130"/>
        <end position="135"/>
    </location>
</feature>
<feature type="strand" evidence="13">
    <location>
        <begin position="144"/>
        <end position="151"/>
    </location>
</feature>
<feature type="helix" evidence="13">
    <location>
        <begin position="153"/>
        <end position="155"/>
    </location>
</feature>
<feature type="strand" evidence="13">
    <location>
        <begin position="157"/>
        <end position="159"/>
    </location>
</feature>
<feature type="strand" evidence="13">
    <location>
        <begin position="163"/>
        <end position="168"/>
    </location>
</feature>
<feature type="helix" evidence="13">
    <location>
        <begin position="175"/>
        <end position="195"/>
    </location>
</feature>
<feature type="helix" evidence="13">
    <location>
        <begin position="215"/>
        <end position="228"/>
    </location>
</feature>
<feature type="strand" evidence="13">
    <location>
        <begin position="237"/>
        <end position="243"/>
    </location>
</feature>
<feature type="helix" evidence="13">
    <location>
        <begin position="246"/>
        <end position="249"/>
    </location>
</feature>
<feature type="turn" evidence="13">
    <location>
        <begin position="252"/>
        <end position="255"/>
    </location>
</feature>
<feature type="strand" evidence="13">
    <location>
        <begin position="256"/>
        <end position="258"/>
    </location>
</feature>
<feature type="helix" evidence="13">
    <location>
        <begin position="260"/>
        <end position="263"/>
    </location>
</feature>
<feature type="helix" evidence="13">
    <location>
        <begin position="272"/>
        <end position="285"/>
    </location>
</feature>
<feature type="strand" evidence="13">
    <location>
        <begin position="288"/>
        <end position="293"/>
    </location>
</feature>
<feature type="helix" evidence="13">
    <location>
        <begin position="300"/>
        <end position="310"/>
    </location>
</feature>
<feature type="turn" evidence="13">
    <location>
        <begin position="311"/>
        <end position="313"/>
    </location>
</feature>
<feature type="strand" evidence="13">
    <location>
        <begin position="314"/>
        <end position="319"/>
    </location>
</feature>
<feature type="turn" evidence="13">
    <location>
        <begin position="320"/>
        <end position="324"/>
    </location>
</feature>
<feature type="helix" evidence="13">
    <location>
        <begin position="326"/>
        <end position="334"/>
    </location>
</feature>
<feature type="strand" evidence="13">
    <location>
        <begin position="339"/>
        <end position="343"/>
    </location>
</feature>
<feature type="helix" evidence="13">
    <location>
        <begin position="345"/>
        <end position="348"/>
    </location>
</feature>
<feature type="helix" evidence="13">
    <location>
        <begin position="351"/>
        <end position="363"/>
    </location>
</feature>
<feature type="strand" evidence="13">
    <location>
        <begin position="367"/>
        <end position="371"/>
    </location>
</feature>
<feature type="helix" evidence="13">
    <location>
        <begin position="381"/>
        <end position="388"/>
    </location>
</feature>
<feature type="strand" evidence="13">
    <location>
        <begin position="393"/>
        <end position="395"/>
    </location>
</feature>
<feature type="strand" evidence="13">
    <location>
        <begin position="399"/>
        <end position="401"/>
    </location>
</feature>
<feature type="helix" evidence="13">
    <location>
        <begin position="402"/>
        <end position="418"/>
    </location>
</feature>
<feature type="helix" evidence="13">
    <location>
        <begin position="419"/>
        <end position="421"/>
    </location>
</feature>
<feature type="helix" evidence="13">
    <location>
        <begin position="426"/>
        <end position="429"/>
    </location>
</feature>
<feature type="helix" evidence="12">
    <location>
        <begin position="431"/>
        <end position="433"/>
    </location>
</feature>
<accession>Q5XD01</accession>
<accession>P82479</accession>
<sequence>MSIITDVYAREVLDSRGNPTLEVEVYTESGAFGRGMVPSGASTGEHEAVELRDGDKSRYLGLGTQKAVDNVNNIIAKAIIGYDVRDQQAIDRAMIALDGTPNKGKLGANAILGVSIAVARAAADYLEVPLYTYLGGFNTKVLPTPMMNIINGGSHSDAPIAFQEFMIMPVGAPTFKEGLRWGAEVFHALKKILKERGLVTAVGDEGGFAPKFEGTEDGVETILKAIEAAGYEAGENGIMIGFDCASSEFYDKERKVYDYTKFEGEGAAVRTSAEQVDYLEELVNKYPIITIEDGMDENDWDGWKVLTERLGKRVQLVGDDFFVTNTEYLARGIKENAANSILIKVNQIGTLTETFEAIEMAKEAGYTAVVSHRSGETEDSTIADIAVATNAGQIKTGSLSRTDRIAKYNQLLRIEDQLGEVAQYKGIKSFYNLKK</sequence>
<proteinExistence type="evidence at protein level"/>
<organism>
    <name type="scientific">Streptococcus pyogenes serotype M6 (strain ATCC BAA-946 / MGAS10394)</name>
    <dbReference type="NCBI Taxonomy" id="286636"/>
    <lineage>
        <taxon>Bacteria</taxon>
        <taxon>Bacillati</taxon>
        <taxon>Bacillota</taxon>
        <taxon>Bacilli</taxon>
        <taxon>Lactobacillales</taxon>
        <taxon>Streptococcaceae</taxon>
        <taxon>Streptococcus</taxon>
    </lineage>
</organism>
<keyword id="KW-0002">3D-structure</keyword>
<keyword id="KW-0134">Cell wall</keyword>
<keyword id="KW-0963">Cytoplasm</keyword>
<keyword id="KW-0903">Direct protein sequencing</keyword>
<keyword id="KW-0324">Glycolysis</keyword>
<keyword id="KW-0456">Lyase</keyword>
<keyword id="KW-0460">Magnesium</keyword>
<keyword id="KW-0479">Metal-binding</keyword>
<keyword id="KW-0964">Secreted</keyword>
<keyword id="KW-0843">Virulence</keyword>
<evidence type="ECO:0000255" key="1">
    <source>
        <dbReference type="HAMAP-Rule" id="MF_00318"/>
    </source>
</evidence>
<evidence type="ECO:0000269" key="2">
    <source>
    </source>
</evidence>
<evidence type="ECO:0000269" key="3">
    <source>
    </source>
</evidence>
<evidence type="ECO:0000269" key="4">
    <source>
    </source>
</evidence>
<evidence type="ECO:0000269" key="5">
    <source ref="2"/>
</evidence>
<evidence type="ECO:0000303" key="6">
    <source>
    </source>
</evidence>
<evidence type="ECO:0000305" key="7"/>
<evidence type="ECO:0000305" key="8">
    <source>
    </source>
</evidence>
<evidence type="ECO:0007744" key="9">
    <source>
        <dbReference type="PDB" id="3ZLF"/>
    </source>
</evidence>
<evidence type="ECO:0007744" key="10">
    <source>
        <dbReference type="PDB" id="3ZLG"/>
    </source>
</evidence>
<evidence type="ECO:0007744" key="11">
    <source>
        <dbReference type="PDB" id="3ZLH"/>
    </source>
</evidence>
<evidence type="ECO:0007829" key="12">
    <source>
        <dbReference type="PDB" id="3ZLF"/>
    </source>
</evidence>
<evidence type="ECO:0007829" key="13">
    <source>
        <dbReference type="PDB" id="3ZLG"/>
    </source>
</evidence>